<feature type="chain" id="PRO_0000230924" description="Glucose-6-phosphate isomerase">
    <location>
        <begin position="1"/>
        <end position="551"/>
    </location>
</feature>
<feature type="active site" description="Proton donor" evidence="1">
    <location>
        <position position="352"/>
    </location>
</feature>
<feature type="active site" evidence="1">
    <location>
        <position position="383"/>
    </location>
</feature>
<feature type="active site" evidence="1">
    <location>
        <position position="511"/>
    </location>
</feature>
<keyword id="KW-0963">Cytoplasm</keyword>
<keyword id="KW-0312">Gluconeogenesis</keyword>
<keyword id="KW-0324">Glycolysis</keyword>
<keyword id="KW-0413">Isomerase</keyword>
<keyword id="KW-1185">Reference proteome</keyword>
<reference key="1">
    <citation type="submission" date="2005-08" db="EMBL/GenBank/DDBJ databases">
        <title>Complete sequence of Pelodictyon luteolum DSM 273.</title>
        <authorList>
            <consortium name="US DOE Joint Genome Institute"/>
            <person name="Copeland A."/>
            <person name="Lucas S."/>
            <person name="Lapidus A."/>
            <person name="Barry K."/>
            <person name="Detter J.C."/>
            <person name="Glavina T."/>
            <person name="Hammon N."/>
            <person name="Israni S."/>
            <person name="Pitluck S."/>
            <person name="Bryant D."/>
            <person name="Schmutz J."/>
            <person name="Larimer F."/>
            <person name="Land M."/>
            <person name="Kyrpides N."/>
            <person name="Ivanova N."/>
            <person name="Richardson P."/>
        </authorList>
    </citation>
    <scope>NUCLEOTIDE SEQUENCE [LARGE SCALE GENOMIC DNA]</scope>
    <source>
        <strain>DSM 273 / BCRC 81028 / 2530</strain>
    </source>
</reference>
<protein>
    <recommendedName>
        <fullName evidence="1">Glucose-6-phosphate isomerase</fullName>
        <shortName evidence="1">GPI</shortName>
        <ecNumber evidence="1">5.3.1.9</ecNumber>
    </recommendedName>
    <alternativeName>
        <fullName evidence="1">Phosphoglucose isomerase</fullName>
        <shortName evidence="1">PGI</shortName>
    </alternativeName>
    <alternativeName>
        <fullName evidence="1">Phosphohexose isomerase</fullName>
        <shortName evidence="1">PHI</shortName>
    </alternativeName>
</protein>
<sequence length="551" mass="61755">MDLSRSAAWSALVSHRQEVEQLHMRDMFMSDHDRFKHFSIRWNGLLLDYSKNRINSRTMGLLVELARQANLIEARDGMFAGEKINFTENRAVLHTALRRQPGYTLNVDGLDVPAEVDSVLRQMKAFTDKVVGGEWKGYTGKRITDVVNIGIGGSDLGPCMVTEALRPFADGAIAVHFVSNIDGTHVSEVLKRVDAETTLFVIASKTFTTQETLTNSMTAREWFLSRAIDPAHIALHFAAVSTNRTKVVEFGIDPENMFRFWDWVGGRYSLWSAIGLSIALYLGFEAFQELLRGARAMDEHFQEAPLEENIPVILALLGVWYNNFFDVPSHAVIPYDQYLHRLPAYLQQLDMESNGKRVDRLGNTVEYPTGPIIWGEPGTNSQHAFFQLLHQGTGFIPADFILPLKTQNPIGEHHDILVANCFAQTEALMRGKSASEASEELAAAGVDEETMQMLVAHKVFPGNRPTNTLLLDEINPFTLGSLIAMYEHKVFVQGVIWQVNSFDQWGVELGKQLAKAILPELQSQKESDAHDASTNALINSYRSYREGQKVG</sequence>
<evidence type="ECO:0000255" key="1">
    <source>
        <dbReference type="HAMAP-Rule" id="MF_00473"/>
    </source>
</evidence>
<evidence type="ECO:0000305" key="2"/>
<accession>Q3B3Q8</accession>
<dbReference type="EC" id="5.3.1.9" evidence="1"/>
<dbReference type="EMBL" id="CP000096">
    <property type="protein sequence ID" value="ABB24023.1"/>
    <property type="status" value="ALT_INIT"/>
    <property type="molecule type" value="Genomic_DNA"/>
</dbReference>
<dbReference type="RefSeq" id="WP_041464108.1">
    <property type="nucleotide sequence ID" value="NC_007512.1"/>
</dbReference>
<dbReference type="SMR" id="Q3B3Q8"/>
<dbReference type="STRING" id="319225.Plut_1161"/>
<dbReference type="KEGG" id="plt:Plut_1161"/>
<dbReference type="eggNOG" id="COG0166">
    <property type="taxonomic scope" value="Bacteria"/>
</dbReference>
<dbReference type="HOGENOM" id="CLU_017947_3_1_10"/>
<dbReference type="OrthoDB" id="140919at2"/>
<dbReference type="UniPathway" id="UPA00109">
    <property type="reaction ID" value="UER00181"/>
</dbReference>
<dbReference type="UniPathway" id="UPA00138"/>
<dbReference type="Proteomes" id="UP000002709">
    <property type="component" value="Chromosome"/>
</dbReference>
<dbReference type="GO" id="GO:0005829">
    <property type="term" value="C:cytosol"/>
    <property type="evidence" value="ECO:0007669"/>
    <property type="project" value="TreeGrafter"/>
</dbReference>
<dbReference type="GO" id="GO:0097367">
    <property type="term" value="F:carbohydrate derivative binding"/>
    <property type="evidence" value="ECO:0007669"/>
    <property type="project" value="InterPro"/>
</dbReference>
<dbReference type="GO" id="GO:0004347">
    <property type="term" value="F:glucose-6-phosphate isomerase activity"/>
    <property type="evidence" value="ECO:0007669"/>
    <property type="project" value="UniProtKB-UniRule"/>
</dbReference>
<dbReference type="GO" id="GO:0048029">
    <property type="term" value="F:monosaccharide binding"/>
    <property type="evidence" value="ECO:0007669"/>
    <property type="project" value="TreeGrafter"/>
</dbReference>
<dbReference type="GO" id="GO:0006094">
    <property type="term" value="P:gluconeogenesis"/>
    <property type="evidence" value="ECO:0007669"/>
    <property type="project" value="UniProtKB-UniRule"/>
</dbReference>
<dbReference type="GO" id="GO:0051156">
    <property type="term" value="P:glucose 6-phosphate metabolic process"/>
    <property type="evidence" value="ECO:0007669"/>
    <property type="project" value="TreeGrafter"/>
</dbReference>
<dbReference type="GO" id="GO:0006096">
    <property type="term" value="P:glycolytic process"/>
    <property type="evidence" value="ECO:0007669"/>
    <property type="project" value="UniProtKB-UniRule"/>
</dbReference>
<dbReference type="CDD" id="cd05015">
    <property type="entry name" value="SIS_PGI_1"/>
    <property type="match status" value="1"/>
</dbReference>
<dbReference type="CDD" id="cd05016">
    <property type="entry name" value="SIS_PGI_2"/>
    <property type="match status" value="1"/>
</dbReference>
<dbReference type="FunFam" id="1.10.1390.10:FF:000001">
    <property type="entry name" value="Glucose-6-phosphate isomerase"/>
    <property type="match status" value="1"/>
</dbReference>
<dbReference type="FunFam" id="3.40.50.10490:FF:000004">
    <property type="entry name" value="Glucose-6-phosphate isomerase"/>
    <property type="match status" value="1"/>
</dbReference>
<dbReference type="Gene3D" id="1.10.1390.10">
    <property type="match status" value="1"/>
</dbReference>
<dbReference type="Gene3D" id="3.40.50.10490">
    <property type="entry name" value="Glucose-6-phosphate isomerase like protein, domain 1"/>
    <property type="match status" value="2"/>
</dbReference>
<dbReference type="HAMAP" id="MF_00473">
    <property type="entry name" value="G6P_isomerase"/>
    <property type="match status" value="1"/>
</dbReference>
<dbReference type="InterPro" id="IPR001672">
    <property type="entry name" value="G6P_Isomerase"/>
</dbReference>
<dbReference type="InterPro" id="IPR023096">
    <property type="entry name" value="G6P_Isomerase_C"/>
</dbReference>
<dbReference type="InterPro" id="IPR018189">
    <property type="entry name" value="Phosphoglucose_isomerase_CS"/>
</dbReference>
<dbReference type="InterPro" id="IPR046348">
    <property type="entry name" value="SIS_dom_sf"/>
</dbReference>
<dbReference type="InterPro" id="IPR035476">
    <property type="entry name" value="SIS_PGI_1"/>
</dbReference>
<dbReference type="InterPro" id="IPR035482">
    <property type="entry name" value="SIS_PGI_2"/>
</dbReference>
<dbReference type="NCBIfam" id="NF001211">
    <property type="entry name" value="PRK00179.1"/>
    <property type="match status" value="1"/>
</dbReference>
<dbReference type="PANTHER" id="PTHR11469">
    <property type="entry name" value="GLUCOSE-6-PHOSPHATE ISOMERASE"/>
    <property type="match status" value="1"/>
</dbReference>
<dbReference type="PANTHER" id="PTHR11469:SF1">
    <property type="entry name" value="GLUCOSE-6-PHOSPHATE ISOMERASE"/>
    <property type="match status" value="1"/>
</dbReference>
<dbReference type="Pfam" id="PF00342">
    <property type="entry name" value="PGI"/>
    <property type="match status" value="1"/>
</dbReference>
<dbReference type="PRINTS" id="PR00662">
    <property type="entry name" value="G6PISOMERASE"/>
</dbReference>
<dbReference type="SUPFAM" id="SSF53697">
    <property type="entry name" value="SIS domain"/>
    <property type="match status" value="1"/>
</dbReference>
<dbReference type="PROSITE" id="PS00765">
    <property type="entry name" value="P_GLUCOSE_ISOMERASE_1"/>
    <property type="match status" value="1"/>
</dbReference>
<dbReference type="PROSITE" id="PS00174">
    <property type="entry name" value="P_GLUCOSE_ISOMERASE_2"/>
    <property type="match status" value="1"/>
</dbReference>
<dbReference type="PROSITE" id="PS51463">
    <property type="entry name" value="P_GLUCOSE_ISOMERASE_3"/>
    <property type="match status" value="1"/>
</dbReference>
<name>G6PI_CHLL3</name>
<proteinExistence type="inferred from homology"/>
<comment type="function">
    <text evidence="1">Catalyzes the reversible isomerization of glucose-6-phosphate to fructose-6-phosphate.</text>
</comment>
<comment type="catalytic activity">
    <reaction evidence="1">
        <text>alpha-D-glucose 6-phosphate = beta-D-fructose 6-phosphate</text>
        <dbReference type="Rhea" id="RHEA:11816"/>
        <dbReference type="ChEBI" id="CHEBI:57634"/>
        <dbReference type="ChEBI" id="CHEBI:58225"/>
        <dbReference type="EC" id="5.3.1.9"/>
    </reaction>
</comment>
<comment type="pathway">
    <text evidence="1">Carbohydrate biosynthesis; gluconeogenesis.</text>
</comment>
<comment type="pathway">
    <text evidence="1">Carbohydrate degradation; glycolysis; D-glyceraldehyde 3-phosphate and glycerone phosphate from D-glucose: step 2/4.</text>
</comment>
<comment type="subcellular location">
    <subcellularLocation>
        <location evidence="1">Cytoplasm</location>
    </subcellularLocation>
</comment>
<comment type="similarity">
    <text evidence="1">Belongs to the GPI family.</text>
</comment>
<comment type="sequence caution" evidence="2">
    <conflict type="erroneous initiation">
        <sequence resource="EMBL-CDS" id="ABB24023"/>
    </conflict>
</comment>
<organism>
    <name type="scientific">Chlorobium luteolum (strain DSM 273 / BCRC 81028 / 2530)</name>
    <name type="common">Pelodictyon luteolum</name>
    <dbReference type="NCBI Taxonomy" id="319225"/>
    <lineage>
        <taxon>Bacteria</taxon>
        <taxon>Pseudomonadati</taxon>
        <taxon>Chlorobiota</taxon>
        <taxon>Chlorobiia</taxon>
        <taxon>Chlorobiales</taxon>
        <taxon>Chlorobiaceae</taxon>
        <taxon>Chlorobium/Pelodictyon group</taxon>
        <taxon>Pelodictyon</taxon>
    </lineage>
</organism>
<gene>
    <name evidence="1" type="primary">pgi</name>
    <name type="ordered locus">Plut_1161</name>
</gene>